<accession>P31306</accession>
<accession>A8AYX4</accession>
<keyword id="KW-1003">Cell membrane</keyword>
<keyword id="KW-0449">Lipoprotein</keyword>
<keyword id="KW-0472">Membrane</keyword>
<keyword id="KW-0564">Palmitate</keyword>
<keyword id="KW-0571">Peptide transport</keyword>
<keyword id="KW-0653">Protein transport</keyword>
<keyword id="KW-1185">Reference proteome</keyword>
<keyword id="KW-0732">Signal</keyword>
<keyword id="KW-0813">Transport</keyword>
<name>SARA_STRGC</name>
<feature type="signal peptide">
    <location>
        <begin position="1"/>
        <end position="22"/>
    </location>
</feature>
<feature type="chain" id="PRO_0000018189" description="Oligopeptide-binding protein SarA">
    <location>
        <begin position="23"/>
        <end position="663"/>
    </location>
</feature>
<feature type="region of interest" description="Disordered" evidence="2">
    <location>
        <begin position="637"/>
        <end position="663"/>
    </location>
</feature>
<feature type="lipid moiety-binding region" description="N-palmitoyl cysteine" evidence="1 3">
    <location>
        <position position="23"/>
    </location>
</feature>
<feature type="lipid moiety-binding region" description="S-diacylglycerol cysteine" evidence="5">
    <location>
        <position position="23"/>
    </location>
</feature>
<gene>
    <name type="primary">sarA</name>
    <name type="synonym">hppA</name>
    <name type="ordered locus">SGO_1712</name>
</gene>
<sequence length="663" mass="73371">MKKGKILALAGVALLATGVLAACSNSTSNSSNSSSSGADQVFNYIYEVDPENLNYLISSKAATTDLTANLIDGLLENDNYGNLVPSMAEDWTVSKDGLTYTYTLRKDAKWYTSDGEEYADVKAQDFVAGLKYAADNKSETLYLVQSSIKGLDDYVNGKTKDFSSVGVKAVDDHTVQYTLNEPESFWNSKTTMGILYPVNEEFLKSKGDKFAQSADPTSLLYNGPFLLKSITSKSSIEFAKNPNYWDKDNVHVSDVKLTYFDGQDQGKPAEQFAKGALSAARLAPTSATFSKVEKEFKDNIVYTPQDSTSYLVGVNIDRQAYNHTAKSSDAQKSSTKKALMNKDFRQALSFAFDRTAYASQVNGKEGATKMLRNLYIPPTFVQADGKSFGELVKEKVASYGDEWKDVNFDDAQDGLYNKEKAKAEFAKAKKALQEEGVEFPIHLDMPVDQTATAKVQRVQSLKQSIESSLGTDNVVVDIHQMKTDDVLNITYYAASAAEEDWDISDNVGWSPDYQDPSTYLEIIKPGGENTKTFLGFDGKENAAAEQVGLKEYAKLVDEAAAEKTDVNKRYEKYATAQAWLTDSALLIPTTSRTGRPVLTKIVPFTAPFAWSGAKGRDMASYKYLKLQDKAVTAKEYQKAQEKWNKERAESNKKAQEELEKHVK</sequence>
<dbReference type="EMBL" id="CP000725">
    <property type="protein sequence ID" value="ABV10882.1"/>
    <property type="molecule type" value="Genomic_DNA"/>
</dbReference>
<dbReference type="EMBL" id="S85398">
    <property type="protein sequence ID" value="AAB21606.1"/>
    <property type="molecule type" value="Genomic_DNA"/>
</dbReference>
<dbReference type="PIR" id="A43896">
    <property type="entry name" value="A43896"/>
</dbReference>
<dbReference type="RefSeq" id="WP_012130757.1">
    <property type="nucleotide sequence ID" value="NC_009785.1"/>
</dbReference>
<dbReference type="SMR" id="P31306"/>
<dbReference type="STRING" id="467705.SGO_1712"/>
<dbReference type="KEGG" id="sgo:SGO_1712"/>
<dbReference type="eggNOG" id="COG4166">
    <property type="taxonomic scope" value="Bacteria"/>
</dbReference>
<dbReference type="HOGENOM" id="CLU_026497_0_0_9"/>
<dbReference type="Proteomes" id="UP000001131">
    <property type="component" value="Chromosome"/>
</dbReference>
<dbReference type="GO" id="GO:0043190">
    <property type="term" value="C:ATP-binding cassette (ABC) transporter complex"/>
    <property type="evidence" value="ECO:0007669"/>
    <property type="project" value="InterPro"/>
</dbReference>
<dbReference type="GO" id="GO:0042597">
    <property type="term" value="C:periplasmic space"/>
    <property type="evidence" value="ECO:0007669"/>
    <property type="project" value="UniProtKB-ARBA"/>
</dbReference>
<dbReference type="GO" id="GO:1904680">
    <property type="term" value="F:peptide transmembrane transporter activity"/>
    <property type="evidence" value="ECO:0007669"/>
    <property type="project" value="TreeGrafter"/>
</dbReference>
<dbReference type="GO" id="GO:0015833">
    <property type="term" value="P:peptide transport"/>
    <property type="evidence" value="ECO:0007669"/>
    <property type="project" value="UniProtKB-KW"/>
</dbReference>
<dbReference type="GO" id="GO:0015031">
    <property type="term" value="P:protein transport"/>
    <property type="evidence" value="ECO:0007669"/>
    <property type="project" value="UniProtKB-KW"/>
</dbReference>
<dbReference type="CDD" id="cd08504">
    <property type="entry name" value="PBP2_OppA"/>
    <property type="match status" value="1"/>
</dbReference>
<dbReference type="Gene3D" id="3.90.76.10">
    <property type="entry name" value="Dipeptide-binding Protein, Domain 1"/>
    <property type="match status" value="1"/>
</dbReference>
<dbReference type="Gene3D" id="3.10.105.10">
    <property type="entry name" value="Dipeptide-binding Protein, Domain 3"/>
    <property type="match status" value="1"/>
</dbReference>
<dbReference type="Gene3D" id="3.40.190.10">
    <property type="entry name" value="Periplasmic binding protein-like II"/>
    <property type="match status" value="1"/>
</dbReference>
<dbReference type="InterPro" id="IPR030678">
    <property type="entry name" value="Peptide/Ni-bd"/>
</dbReference>
<dbReference type="InterPro" id="IPR039424">
    <property type="entry name" value="SBP_5"/>
</dbReference>
<dbReference type="InterPro" id="IPR023765">
    <property type="entry name" value="SBP_5_CS"/>
</dbReference>
<dbReference type="InterPro" id="IPR000914">
    <property type="entry name" value="SBP_5_dom"/>
</dbReference>
<dbReference type="PANTHER" id="PTHR30290">
    <property type="entry name" value="PERIPLASMIC BINDING COMPONENT OF ABC TRANSPORTER"/>
    <property type="match status" value="1"/>
</dbReference>
<dbReference type="PANTHER" id="PTHR30290:SF10">
    <property type="entry name" value="PERIPLASMIC OLIGOPEPTIDE-BINDING PROTEIN-RELATED"/>
    <property type="match status" value="1"/>
</dbReference>
<dbReference type="Pfam" id="PF00496">
    <property type="entry name" value="SBP_bac_5"/>
    <property type="match status" value="1"/>
</dbReference>
<dbReference type="PIRSF" id="PIRSF002741">
    <property type="entry name" value="MppA"/>
    <property type="match status" value="1"/>
</dbReference>
<dbReference type="SUPFAM" id="SSF53850">
    <property type="entry name" value="Periplasmic binding protein-like II"/>
    <property type="match status" value="1"/>
</dbReference>
<dbReference type="PROSITE" id="PS51257">
    <property type="entry name" value="PROKAR_LIPOPROTEIN"/>
    <property type="match status" value="1"/>
</dbReference>
<dbReference type="PROSITE" id="PS01040">
    <property type="entry name" value="SBP_BACTERIAL_5"/>
    <property type="match status" value="1"/>
</dbReference>
<organism>
    <name type="scientific">Streptococcus gordonii (strain Challis / ATCC 35105 / BCRC 15272 / CH1 / DL1 / V288)</name>
    <dbReference type="NCBI Taxonomy" id="467705"/>
    <lineage>
        <taxon>Bacteria</taxon>
        <taxon>Bacillati</taxon>
        <taxon>Bacillota</taxon>
        <taxon>Bacilli</taxon>
        <taxon>Lactobacillales</taxon>
        <taxon>Streptococcaceae</taxon>
        <taxon>Streptococcus</taxon>
    </lineage>
</organism>
<comment type="function">
    <text>May be involved in the expression of cell surface properties important for colonization of the human oral cavity. It may also be involved in uptake processes.</text>
</comment>
<comment type="subcellular location">
    <subcellularLocation>
        <location>Cell membrane</location>
        <topology>Lipid-anchor</topology>
    </subcellularLocation>
</comment>
<comment type="similarity">
    <text evidence="4">Belongs to the bacterial solute-binding protein 5 family.</text>
</comment>
<proteinExistence type="evidence at protein level"/>
<protein>
    <recommendedName>
        <fullName>Oligopeptide-binding protein SarA</fullName>
    </recommendedName>
    <alternativeName>
        <fullName>76 kDa cell surface lipoprotein</fullName>
    </alternativeName>
</protein>
<reference key="1">
    <citation type="journal article" date="2007" name="J. Bacteriol.">
        <title>Genome-wide transcriptional changes in Streptococcus gordonii in response to competence signaling peptide.</title>
        <authorList>
            <person name="Vickerman M.M."/>
            <person name="Iobst S."/>
            <person name="Jesionowski A.M."/>
            <person name="Gill S.R."/>
        </authorList>
    </citation>
    <scope>NUCLEOTIDE SEQUENCE [LARGE SCALE GENOMIC DNA]</scope>
    <source>
        <strain>Challis / ATCC 35105 / BCRC 15272 / CH1 / DL1 / V288</strain>
    </source>
</reference>
<reference key="2">
    <citation type="journal article" date="1992" name="Infect. Immun.">
        <title>Adherence, coaggregation, and hydrophobicity of Streptococcus gordonii associated with expression of cell surface lipoproteins.</title>
        <authorList>
            <person name="Jenkinson H.F."/>
        </authorList>
    </citation>
    <scope>NUCLEOTIDE SEQUENCE [GENOMIC DNA] OF 1-55</scope>
    <scope>DIACYLGLYCEROL AT CYS-23</scope>
    <scope>PALMITOYLATION AT CYS-23</scope>
</reference>
<evidence type="ECO:0000255" key="1">
    <source>
        <dbReference type="PROSITE-ProRule" id="PRU00303"/>
    </source>
</evidence>
<evidence type="ECO:0000256" key="2">
    <source>
        <dbReference type="SAM" id="MobiDB-lite"/>
    </source>
</evidence>
<evidence type="ECO:0000269" key="3">
    <source>
    </source>
</evidence>
<evidence type="ECO:0000305" key="4"/>
<evidence type="ECO:0000305" key="5">
    <source>
    </source>
</evidence>